<dbReference type="EC" id="2.3.1.89" evidence="1"/>
<dbReference type="EMBL" id="AJ938182">
    <property type="protein sequence ID" value="CAI80941.1"/>
    <property type="molecule type" value="Genomic_DNA"/>
</dbReference>
<dbReference type="RefSeq" id="WP_000249846.1">
    <property type="nucleotide sequence ID" value="NC_007622.1"/>
</dbReference>
<dbReference type="SMR" id="Q2YXZ7"/>
<dbReference type="KEGG" id="sab:SAB1252"/>
<dbReference type="HOGENOM" id="CLU_103751_0_0_9"/>
<dbReference type="UniPathway" id="UPA00034">
    <property type="reaction ID" value="UER00022"/>
</dbReference>
<dbReference type="GO" id="GO:0047200">
    <property type="term" value="F:tetrahydrodipicolinate N-acetyltransferase activity"/>
    <property type="evidence" value="ECO:0007669"/>
    <property type="project" value="UniProtKB-EC"/>
</dbReference>
<dbReference type="GO" id="GO:0019877">
    <property type="term" value="P:diaminopimelate biosynthetic process"/>
    <property type="evidence" value="ECO:0007669"/>
    <property type="project" value="UniProtKB-UniRule"/>
</dbReference>
<dbReference type="GO" id="GO:0009089">
    <property type="term" value="P:lysine biosynthetic process via diaminopimelate"/>
    <property type="evidence" value="ECO:0007669"/>
    <property type="project" value="UniProtKB-UniRule"/>
</dbReference>
<dbReference type="CDD" id="cd03350">
    <property type="entry name" value="LbH_THP_succinylT"/>
    <property type="match status" value="1"/>
</dbReference>
<dbReference type="Gene3D" id="2.160.10.10">
    <property type="entry name" value="Hexapeptide repeat proteins"/>
    <property type="match status" value="1"/>
</dbReference>
<dbReference type="Gene3D" id="3.30.70.250">
    <property type="entry name" value="Malonyl-CoA ACP transacylase, ACP-binding"/>
    <property type="match status" value="1"/>
</dbReference>
<dbReference type="HAMAP" id="MF_01691">
    <property type="entry name" value="DapH"/>
    <property type="match status" value="1"/>
</dbReference>
<dbReference type="InterPro" id="IPR019873">
    <property type="entry name" value="DapH"/>
</dbReference>
<dbReference type="InterPro" id="IPR013710">
    <property type="entry name" value="DapH_N"/>
</dbReference>
<dbReference type="InterPro" id="IPR001451">
    <property type="entry name" value="Hexapep"/>
</dbReference>
<dbReference type="InterPro" id="IPR018357">
    <property type="entry name" value="Hexapep_transf_CS"/>
</dbReference>
<dbReference type="InterPro" id="IPR050179">
    <property type="entry name" value="Trans_hexapeptide_repeat"/>
</dbReference>
<dbReference type="InterPro" id="IPR011004">
    <property type="entry name" value="Trimer_LpxA-like_sf"/>
</dbReference>
<dbReference type="NCBIfam" id="TIGR03532">
    <property type="entry name" value="DapD_Ac"/>
    <property type="match status" value="1"/>
</dbReference>
<dbReference type="PANTHER" id="PTHR43300:SF10">
    <property type="entry name" value="2,3,4,5-TETRAHYDROPYRIDINE-2,6-DICARBOXYLATE N-ACETYLTRANSFERASE"/>
    <property type="match status" value="1"/>
</dbReference>
<dbReference type="PANTHER" id="PTHR43300">
    <property type="entry name" value="ACETYLTRANSFERASE"/>
    <property type="match status" value="1"/>
</dbReference>
<dbReference type="Pfam" id="PF08503">
    <property type="entry name" value="DapH_N"/>
    <property type="match status" value="1"/>
</dbReference>
<dbReference type="Pfam" id="PF00132">
    <property type="entry name" value="Hexapep"/>
    <property type="match status" value="1"/>
</dbReference>
<dbReference type="Pfam" id="PF14602">
    <property type="entry name" value="Hexapep_2"/>
    <property type="match status" value="1"/>
</dbReference>
<dbReference type="SUPFAM" id="SSF51161">
    <property type="entry name" value="Trimeric LpxA-like enzymes"/>
    <property type="match status" value="1"/>
</dbReference>
<dbReference type="PROSITE" id="PS00101">
    <property type="entry name" value="HEXAPEP_TRANSFERASES"/>
    <property type="match status" value="1"/>
</dbReference>
<evidence type="ECO:0000255" key="1">
    <source>
        <dbReference type="HAMAP-Rule" id="MF_01691"/>
    </source>
</evidence>
<reference key="1">
    <citation type="journal article" date="2007" name="PLoS ONE">
        <title>Molecular correlates of host specialization in Staphylococcus aureus.</title>
        <authorList>
            <person name="Herron-Olson L."/>
            <person name="Fitzgerald J.R."/>
            <person name="Musser J.M."/>
            <person name="Kapur V."/>
        </authorList>
    </citation>
    <scope>NUCLEOTIDE SEQUENCE [LARGE SCALE GENOMIC DNA]</scope>
    <source>
        <strain>bovine RF122 / ET3-1</strain>
    </source>
</reference>
<protein>
    <recommendedName>
        <fullName evidence="1">2,3,4,5-tetrahydropyridine-2,6-dicarboxylate N-acetyltransferase</fullName>
        <ecNumber evidence="1">2.3.1.89</ecNumber>
    </recommendedName>
    <alternativeName>
        <fullName evidence="1">Tetrahydrodipicolinate N-acetyltransferase</fullName>
        <shortName evidence="1">THP acetyltransferase</shortName>
        <shortName evidence="1">Tetrahydropicolinate acetylase</shortName>
    </alternativeName>
</protein>
<name>DAPH_STAAB</name>
<organism>
    <name type="scientific">Staphylococcus aureus (strain bovine RF122 / ET3-1)</name>
    <dbReference type="NCBI Taxonomy" id="273036"/>
    <lineage>
        <taxon>Bacteria</taxon>
        <taxon>Bacillati</taxon>
        <taxon>Bacillota</taxon>
        <taxon>Bacilli</taxon>
        <taxon>Bacillales</taxon>
        <taxon>Staphylococcaceae</taxon>
        <taxon>Staphylococcus</taxon>
    </lineage>
</organism>
<keyword id="KW-0012">Acyltransferase</keyword>
<keyword id="KW-0028">Amino-acid biosynthesis</keyword>
<keyword id="KW-0220">Diaminopimelate biosynthesis</keyword>
<keyword id="KW-0457">Lysine biosynthesis</keyword>
<keyword id="KW-0677">Repeat</keyword>
<keyword id="KW-0808">Transferase</keyword>
<proteinExistence type="inferred from homology"/>
<accession>Q2YXZ7</accession>
<gene>
    <name evidence="1" type="primary">dapH</name>
    <name type="ordered locus">SAB1252</name>
</gene>
<feature type="chain" id="PRO_0000376687" description="2,3,4,5-tetrahydropyridine-2,6-dicarboxylate N-acetyltransferase">
    <location>
        <begin position="1"/>
        <end position="239"/>
    </location>
</feature>
<comment type="function">
    <text evidence="1">Catalyzes the transfer of an acetyl group from acetyl-CoA to tetrahydrodipicolinate.</text>
</comment>
<comment type="catalytic activity">
    <reaction evidence="1">
        <text>(S)-2,3,4,5-tetrahydrodipicolinate + acetyl-CoA + H2O = L-2-acetamido-6-oxoheptanedioate + CoA</text>
        <dbReference type="Rhea" id="RHEA:13085"/>
        <dbReference type="ChEBI" id="CHEBI:15377"/>
        <dbReference type="ChEBI" id="CHEBI:16845"/>
        <dbReference type="ChEBI" id="CHEBI:57287"/>
        <dbReference type="ChEBI" id="CHEBI:57288"/>
        <dbReference type="ChEBI" id="CHEBI:58117"/>
        <dbReference type="EC" id="2.3.1.89"/>
    </reaction>
</comment>
<comment type="pathway">
    <text evidence="1">Amino-acid biosynthesis; L-lysine biosynthesis via DAP pathway; LL-2,6-diaminopimelate from (S)-tetrahydrodipicolinate (acetylase route): step 1/3.</text>
</comment>
<comment type="similarity">
    <text evidence="1">Belongs to the transferase hexapeptide repeat family. DapH subfamily.</text>
</comment>
<sequence length="239" mass="25318">MVQHLTAEEIIQYISDAKKSTPIKVYLNGNFEGITYPESFKVFGSEQSKVIFCEADDWKPFYETYGSQFEDIEIEMDRRNSAIPLKDLTNTNARIEPGAFIREQAIIEDGAVVMMGATINIGAVVGEGTMIDMNATLGGRATTGKNVHVGAGAVLAGVIEPPSASPVIIEDDVLIGANAVILEGVRVGKGAIVAAGAIVTQDVPAGTVVAGTPAKVIKQASEVQDTKKEIVAALRKLND</sequence>